<comment type="function">
    <text evidence="1">Catalyzes the synthesis of alpha-ribazole-5'-phosphate from nicotinate mononucleotide (NAMN) and 5,6-dimethylbenzimidazole (DMB).</text>
</comment>
<comment type="catalytic activity">
    <reaction evidence="1">
        <text>5,6-dimethylbenzimidazole + nicotinate beta-D-ribonucleotide = alpha-ribazole 5'-phosphate + nicotinate + H(+)</text>
        <dbReference type="Rhea" id="RHEA:11196"/>
        <dbReference type="ChEBI" id="CHEBI:15378"/>
        <dbReference type="ChEBI" id="CHEBI:15890"/>
        <dbReference type="ChEBI" id="CHEBI:32544"/>
        <dbReference type="ChEBI" id="CHEBI:57502"/>
        <dbReference type="ChEBI" id="CHEBI:57918"/>
        <dbReference type="EC" id="2.4.2.21"/>
    </reaction>
</comment>
<comment type="pathway">
    <text evidence="1">Nucleoside biosynthesis; alpha-ribazole biosynthesis; alpha-ribazole from 5,6-dimethylbenzimidazole: step 1/2.</text>
</comment>
<comment type="similarity">
    <text evidence="1">Belongs to the CobT family.</text>
</comment>
<organism>
    <name type="scientific">Chlorobaculum tepidum (strain ATCC 49652 / DSM 12025 / NBRC 103806 / TLS)</name>
    <name type="common">Chlorobium tepidum</name>
    <dbReference type="NCBI Taxonomy" id="194439"/>
    <lineage>
        <taxon>Bacteria</taxon>
        <taxon>Pseudomonadati</taxon>
        <taxon>Chlorobiota</taxon>
        <taxon>Chlorobiia</taxon>
        <taxon>Chlorobiales</taxon>
        <taxon>Chlorobiaceae</taxon>
        <taxon>Chlorobaculum</taxon>
    </lineage>
</organism>
<accession>Q8KDU8</accession>
<dbReference type="EC" id="2.4.2.21" evidence="1"/>
<dbReference type="EMBL" id="AE006470">
    <property type="protein sequence ID" value="AAM72181.1"/>
    <property type="molecule type" value="Genomic_DNA"/>
</dbReference>
<dbReference type="RefSeq" id="NP_661839.1">
    <property type="nucleotide sequence ID" value="NC_002932.3"/>
</dbReference>
<dbReference type="RefSeq" id="WP_010932626.1">
    <property type="nucleotide sequence ID" value="NC_002932.3"/>
</dbReference>
<dbReference type="SMR" id="Q8KDU8"/>
<dbReference type="STRING" id="194439.CT0946"/>
<dbReference type="EnsemblBacteria" id="AAM72181">
    <property type="protein sequence ID" value="AAM72181"/>
    <property type="gene ID" value="CT0946"/>
</dbReference>
<dbReference type="KEGG" id="cte:CT0946"/>
<dbReference type="PATRIC" id="fig|194439.7.peg.857"/>
<dbReference type="eggNOG" id="COG2038">
    <property type="taxonomic scope" value="Bacteria"/>
</dbReference>
<dbReference type="HOGENOM" id="CLU_002982_0_0_10"/>
<dbReference type="OrthoDB" id="9781491at2"/>
<dbReference type="UniPathway" id="UPA00061">
    <property type="reaction ID" value="UER00516"/>
</dbReference>
<dbReference type="Proteomes" id="UP000001007">
    <property type="component" value="Chromosome"/>
</dbReference>
<dbReference type="GO" id="GO:0008939">
    <property type="term" value="F:nicotinate-nucleotide-dimethylbenzimidazole phosphoribosyltransferase activity"/>
    <property type="evidence" value="ECO:0007669"/>
    <property type="project" value="UniProtKB-UniRule"/>
</dbReference>
<dbReference type="GO" id="GO:0009236">
    <property type="term" value="P:cobalamin biosynthetic process"/>
    <property type="evidence" value="ECO:0007669"/>
    <property type="project" value="UniProtKB-KW"/>
</dbReference>
<dbReference type="CDD" id="cd02439">
    <property type="entry name" value="DMB-PRT_CobT"/>
    <property type="match status" value="1"/>
</dbReference>
<dbReference type="FunFam" id="3.40.50.10210:FF:000001">
    <property type="entry name" value="Nicotinate-nucleotide--dimethylbenzimidazole phosphoribosyltransferase"/>
    <property type="match status" value="1"/>
</dbReference>
<dbReference type="Gene3D" id="1.10.1610.10">
    <property type="match status" value="1"/>
</dbReference>
<dbReference type="Gene3D" id="3.40.50.10210">
    <property type="match status" value="1"/>
</dbReference>
<dbReference type="HAMAP" id="MF_00230">
    <property type="entry name" value="CobT"/>
    <property type="match status" value="1"/>
</dbReference>
<dbReference type="InterPro" id="IPR003200">
    <property type="entry name" value="Nict_dMeBzImd_PRibTrfase"/>
</dbReference>
<dbReference type="InterPro" id="IPR017846">
    <property type="entry name" value="Nict_dMeBzImd_PRibTrfase_bact"/>
</dbReference>
<dbReference type="InterPro" id="IPR023195">
    <property type="entry name" value="Nict_dMeBzImd_PRibTrfase_N"/>
</dbReference>
<dbReference type="InterPro" id="IPR036087">
    <property type="entry name" value="Nict_dMeBzImd_PRibTrfase_sf"/>
</dbReference>
<dbReference type="NCBIfam" id="TIGR03160">
    <property type="entry name" value="cobT_DBIPRT"/>
    <property type="match status" value="1"/>
</dbReference>
<dbReference type="NCBIfam" id="NF000996">
    <property type="entry name" value="PRK00105.1"/>
    <property type="match status" value="1"/>
</dbReference>
<dbReference type="PANTHER" id="PTHR43463">
    <property type="entry name" value="NICOTINATE-NUCLEOTIDE--DIMETHYLBENZIMIDAZOLE PHOSPHORIBOSYLTRANSFERASE"/>
    <property type="match status" value="1"/>
</dbReference>
<dbReference type="PANTHER" id="PTHR43463:SF1">
    <property type="entry name" value="NICOTINATE-NUCLEOTIDE--DIMETHYLBENZIMIDAZOLE PHOSPHORIBOSYLTRANSFERASE"/>
    <property type="match status" value="1"/>
</dbReference>
<dbReference type="Pfam" id="PF02277">
    <property type="entry name" value="DBI_PRT"/>
    <property type="match status" value="1"/>
</dbReference>
<dbReference type="SUPFAM" id="SSF52733">
    <property type="entry name" value="Nicotinate mononucleotide:5,6-dimethylbenzimidazole phosphoribosyltransferase (CobT)"/>
    <property type="match status" value="1"/>
</dbReference>
<keyword id="KW-0169">Cobalamin biosynthesis</keyword>
<keyword id="KW-0328">Glycosyltransferase</keyword>
<keyword id="KW-1185">Reference proteome</keyword>
<keyword id="KW-0808">Transferase</keyword>
<sequence length="353" mass="37055">MTDRFQQLLASIKPVDMNLTSTVKAHLDDLTKPQGSLGRLEEIVMKYCIATGTTKPSLSKKKVFCFAGDHGVAAEGVSAFPAEVTPQMVYNMLGGGAAINVLSRHAGADLEVVDMGVNHDFAEHPMLRRCKVKHGSANMAEGPAMSIEETLQAIMAGAELAIEARNQGYELLATGEMGIANTTPATALYATLLGLPVEAITGRGTGIDDERLHHKVAVIEKAIEVNRANLATPLEVLAALGGFEIAGICGLILGAASVGMPVVVDGFISSSAAVCAIKLSCTVSDYLFFSHLSNEQGHRAVMQKLGARPILDLDLRLGEGTGAAMAMQVIEASVKIYNEMATFSSAGVSGKND</sequence>
<gene>
    <name evidence="1" type="primary">cobT</name>
    <name type="ordered locus">CT0946</name>
</gene>
<feature type="chain" id="PRO_0000167040" description="Nicotinate-nucleotide--dimethylbenzimidazole phosphoribosyltransferase">
    <location>
        <begin position="1"/>
        <end position="353"/>
    </location>
</feature>
<feature type="active site" description="Proton acceptor" evidence="1">
    <location>
        <position position="319"/>
    </location>
</feature>
<protein>
    <recommendedName>
        <fullName evidence="1">Nicotinate-nucleotide--dimethylbenzimidazole phosphoribosyltransferase</fullName>
        <shortName evidence="1">NN:DBI PRT</shortName>
        <ecNumber evidence="1">2.4.2.21</ecNumber>
    </recommendedName>
    <alternativeName>
        <fullName evidence="1">N(1)-alpha-phosphoribosyltransferase</fullName>
    </alternativeName>
</protein>
<name>COBT_CHLTE</name>
<reference key="1">
    <citation type="journal article" date="2002" name="Proc. Natl. Acad. Sci. U.S.A.">
        <title>The complete genome sequence of Chlorobium tepidum TLS, a photosynthetic, anaerobic, green-sulfur bacterium.</title>
        <authorList>
            <person name="Eisen J.A."/>
            <person name="Nelson K.E."/>
            <person name="Paulsen I.T."/>
            <person name="Heidelberg J.F."/>
            <person name="Wu M."/>
            <person name="Dodson R.J."/>
            <person name="DeBoy R.T."/>
            <person name="Gwinn M.L."/>
            <person name="Nelson W.C."/>
            <person name="Haft D.H."/>
            <person name="Hickey E.K."/>
            <person name="Peterson J.D."/>
            <person name="Durkin A.S."/>
            <person name="Kolonay J.F."/>
            <person name="Yang F."/>
            <person name="Holt I.E."/>
            <person name="Umayam L.A."/>
            <person name="Mason T.M."/>
            <person name="Brenner M."/>
            <person name="Shea T.P."/>
            <person name="Parksey D.S."/>
            <person name="Nierman W.C."/>
            <person name="Feldblyum T.V."/>
            <person name="Hansen C.L."/>
            <person name="Craven M.B."/>
            <person name="Radune D."/>
            <person name="Vamathevan J.J."/>
            <person name="Khouri H.M."/>
            <person name="White O."/>
            <person name="Gruber T.M."/>
            <person name="Ketchum K.A."/>
            <person name="Venter J.C."/>
            <person name="Tettelin H."/>
            <person name="Bryant D.A."/>
            <person name="Fraser C.M."/>
        </authorList>
    </citation>
    <scope>NUCLEOTIDE SEQUENCE [LARGE SCALE GENOMIC DNA]</scope>
    <source>
        <strain>ATCC 49652 / DSM 12025 / NBRC 103806 / TLS</strain>
    </source>
</reference>
<proteinExistence type="inferred from homology"/>
<evidence type="ECO:0000255" key="1">
    <source>
        <dbReference type="HAMAP-Rule" id="MF_00230"/>
    </source>
</evidence>